<comment type="function">
    <text evidence="1">Bifunctional enzyme that catalyzes the oxidative decarboxylation of UDP-glucuronic acid (UDP-GlcUA) to UDP-4-keto-arabinose (UDP-Ara4O) and the addition of a formyl group to UDP-4-amino-4-deoxy-L-arabinose (UDP-L-Ara4N) to form UDP-L-4-formamido-arabinose (UDP-L-Ara4FN). The modified arabinose is attached to lipid A and is required for resistance to polymyxin and cationic antimicrobial peptides.</text>
</comment>
<comment type="catalytic activity">
    <reaction evidence="1">
        <text>UDP-alpha-D-glucuronate + NAD(+) = UDP-beta-L-threo-pentopyranos-4-ulose + CO2 + NADH</text>
        <dbReference type="Rhea" id="RHEA:24702"/>
        <dbReference type="ChEBI" id="CHEBI:16526"/>
        <dbReference type="ChEBI" id="CHEBI:57540"/>
        <dbReference type="ChEBI" id="CHEBI:57945"/>
        <dbReference type="ChEBI" id="CHEBI:58052"/>
        <dbReference type="ChEBI" id="CHEBI:58710"/>
        <dbReference type="EC" id="1.1.1.305"/>
    </reaction>
</comment>
<comment type="catalytic activity">
    <reaction evidence="1">
        <text>UDP-4-amino-4-deoxy-beta-L-arabinose + (6R)-10-formyltetrahydrofolate = UDP-4-deoxy-4-formamido-beta-L-arabinose + (6S)-5,6,7,8-tetrahydrofolate + H(+)</text>
        <dbReference type="Rhea" id="RHEA:24706"/>
        <dbReference type="ChEBI" id="CHEBI:15378"/>
        <dbReference type="ChEBI" id="CHEBI:57453"/>
        <dbReference type="ChEBI" id="CHEBI:58708"/>
        <dbReference type="ChEBI" id="CHEBI:58709"/>
        <dbReference type="ChEBI" id="CHEBI:195366"/>
        <dbReference type="EC" id="2.1.2.13"/>
    </reaction>
</comment>
<comment type="pathway">
    <text evidence="1">Nucleotide-sugar biosynthesis; UDP-4-deoxy-4-formamido-beta-L-arabinose biosynthesis; UDP-4-deoxy-4-formamido-beta-L-arabinose from UDP-alpha-D-glucuronate: step 1/3.</text>
</comment>
<comment type="pathway">
    <text evidence="1">Nucleotide-sugar biosynthesis; UDP-4-deoxy-4-formamido-beta-L-arabinose biosynthesis; UDP-4-deoxy-4-formamido-beta-L-arabinose from UDP-alpha-D-glucuronate: step 3/3.</text>
</comment>
<comment type="pathway">
    <text evidence="1">Bacterial outer membrane biogenesis; lipopolysaccharide biosynthesis.</text>
</comment>
<comment type="subunit">
    <text evidence="1">Homohexamer, formed by a dimer of trimers.</text>
</comment>
<comment type="similarity">
    <text evidence="1">In the N-terminal section; belongs to the Fmt family. UDP-L-Ara4N formyltransferase subfamily.</text>
</comment>
<comment type="similarity">
    <text evidence="1">In the C-terminal section; belongs to the NAD(P)-dependent epimerase/dehydratase family. UDP-glucuronic acid decarboxylase subfamily.</text>
</comment>
<dbReference type="EC" id="2.1.2.13" evidence="1"/>
<dbReference type="EC" id="1.1.1.305" evidence="1"/>
<dbReference type="EMBL" id="CP000644">
    <property type="protein sequence ID" value="ABO91291.1"/>
    <property type="molecule type" value="Genomic_DNA"/>
</dbReference>
<dbReference type="SMR" id="A4SQW9"/>
<dbReference type="STRING" id="29491.GCA_000820065_03696"/>
<dbReference type="KEGG" id="asa:ASA_3309"/>
<dbReference type="eggNOG" id="COG0223">
    <property type="taxonomic scope" value="Bacteria"/>
</dbReference>
<dbReference type="eggNOG" id="COG0451">
    <property type="taxonomic scope" value="Bacteria"/>
</dbReference>
<dbReference type="HOGENOM" id="CLU_007383_23_2_6"/>
<dbReference type="UniPathway" id="UPA00030"/>
<dbReference type="UniPathway" id="UPA00032">
    <property type="reaction ID" value="UER00492"/>
</dbReference>
<dbReference type="UniPathway" id="UPA00032">
    <property type="reaction ID" value="UER00494"/>
</dbReference>
<dbReference type="Proteomes" id="UP000000225">
    <property type="component" value="Chromosome"/>
</dbReference>
<dbReference type="GO" id="GO:0016020">
    <property type="term" value="C:membrane"/>
    <property type="evidence" value="ECO:0007669"/>
    <property type="project" value="GOC"/>
</dbReference>
<dbReference type="GO" id="GO:0016831">
    <property type="term" value="F:carboxy-lyase activity"/>
    <property type="evidence" value="ECO:0007669"/>
    <property type="project" value="InterPro"/>
</dbReference>
<dbReference type="GO" id="GO:0099619">
    <property type="term" value="F:UDP-4-amino-4-deoxy-L-arabinose formyltransferase activity"/>
    <property type="evidence" value="ECO:0007669"/>
    <property type="project" value="UniProtKB-EC"/>
</dbReference>
<dbReference type="GO" id="GO:0099618">
    <property type="term" value="F:UDP-glucuronate dehydrogenase activity"/>
    <property type="evidence" value="ECO:0007669"/>
    <property type="project" value="UniProtKB-EC"/>
</dbReference>
<dbReference type="GO" id="GO:0009245">
    <property type="term" value="P:lipid A biosynthetic process"/>
    <property type="evidence" value="ECO:0007669"/>
    <property type="project" value="UniProtKB-KW"/>
</dbReference>
<dbReference type="GO" id="GO:0009103">
    <property type="term" value="P:lipopolysaccharide biosynthetic process"/>
    <property type="evidence" value="ECO:0007669"/>
    <property type="project" value="UniProtKB-UniRule"/>
</dbReference>
<dbReference type="GO" id="GO:0046677">
    <property type="term" value="P:response to antibiotic"/>
    <property type="evidence" value="ECO:0007669"/>
    <property type="project" value="UniProtKB-KW"/>
</dbReference>
<dbReference type="CDD" id="cd08702">
    <property type="entry name" value="Arna_FMT_C"/>
    <property type="match status" value="1"/>
</dbReference>
<dbReference type="CDD" id="cd05257">
    <property type="entry name" value="Arna_like_SDR_e"/>
    <property type="match status" value="1"/>
</dbReference>
<dbReference type="FunFam" id="3.40.50.720:FF:000197">
    <property type="entry name" value="Bifunctional polymyxin resistance protein ArnA"/>
    <property type="match status" value="1"/>
</dbReference>
<dbReference type="Gene3D" id="3.40.50.12230">
    <property type="match status" value="1"/>
</dbReference>
<dbReference type="Gene3D" id="3.40.50.720">
    <property type="entry name" value="NAD(P)-binding Rossmann-like Domain"/>
    <property type="match status" value="1"/>
</dbReference>
<dbReference type="HAMAP" id="MF_01166">
    <property type="entry name" value="ArnA"/>
    <property type="match status" value="1"/>
</dbReference>
<dbReference type="InterPro" id="IPR045869">
    <property type="entry name" value="Arna-like_SDR_e"/>
</dbReference>
<dbReference type="InterPro" id="IPR021168">
    <property type="entry name" value="Bifun_polymyxin_resist_ArnA"/>
</dbReference>
<dbReference type="InterPro" id="IPR001509">
    <property type="entry name" value="Epimerase_deHydtase"/>
</dbReference>
<dbReference type="InterPro" id="IPR005793">
    <property type="entry name" value="Formyl_trans_C"/>
</dbReference>
<dbReference type="InterPro" id="IPR002376">
    <property type="entry name" value="Formyl_transf_N"/>
</dbReference>
<dbReference type="InterPro" id="IPR036477">
    <property type="entry name" value="Formyl_transf_N_sf"/>
</dbReference>
<dbReference type="InterPro" id="IPR011034">
    <property type="entry name" value="Formyl_transferase-like_C_sf"/>
</dbReference>
<dbReference type="InterPro" id="IPR050177">
    <property type="entry name" value="Lipid_A_modif_metabolic_enz"/>
</dbReference>
<dbReference type="InterPro" id="IPR036291">
    <property type="entry name" value="NAD(P)-bd_dom_sf"/>
</dbReference>
<dbReference type="NCBIfam" id="NF005414">
    <property type="entry name" value="PRK06988.1"/>
    <property type="match status" value="1"/>
</dbReference>
<dbReference type="NCBIfam" id="NF005998">
    <property type="entry name" value="PRK08125.1"/>
    <property type="match status" value="1"/>
</dbReference>
<dbReference type="NCBIfam" id="NF008872">
    <property type="entry name" value="PRK11908.1"/>
    <property type="match status" value="1"/>
</dbReference>
<dbReference type="PANTHER" id="PTHR43245">
    <property type="entry name" value="BIFUNCTIONAL POLYMYXIN RESISTANCE PROTEIN ARNA"/>
    <property type="match status" value="1"/>
</dbReference>
<dbReference type="PANTHER" id="PTHR43245:SF13">
    <property type="entry name" value="UDP-D-APIOSE_UDP-D-XYLOSE SYNTHASE 2"/>
    <property type="match status" value="1"/>
</dbReference>
<dbReference type="Pfam" id="PF01370">
    <property type="entry name" value="Epimerase"/>
    <property type="match status" value="1"/>
</dbReference>
<dbReference type="Pfam" id="PF02911">
    <property type="entry name" value="Formyl_trans_C"/>
    <property type="match status" value="1"/>
</dbReference>
<dbReference type="Pfam" id="PF00551">
    <property type="entry name" value="Formyl_trans_N"/>
    <property type="match status" value="1"/>
</dbReference>
<dbReference type="PIRSF" id="PIRSF036506">
    <property type="entry name" value="Bifun_polymyxin_resist_ArnA"/>
    <property type="match status" value="1"/>
</dbReference>
<dbReference type="SUPFAM" id="SSF50486">
    <property type="entry name" value="FMT C-terminal domain-like"/>
    <property type="match status" value="1"/>
</dbReference>
<dbReference type="SUPFAM" id="SSF53328">
    <property type="entry name" value="Formyltransferase"/>
    <property type="match status" value="1"/>
</dbReference>
<dbReference type="SUPFAM" id="SSF51735">
    <property type="entry name" value="NAD(P)-binding Rossmann-fold domains"/>
    <property type="match status" value="1"/>
</dbReference>
<organism>
    <name type="scientific">Aeromonas salmonicida (strain A449)</name>
    <dbReference type="NCBI Taxonomy" id="382245"/>
    <lineage>
        <taxon>Bacteria</taxon>
        <taxon>Pseudomonadati</taxon>
        <taxon>Pseudomonadota</taxon>
        <taxon>Gammaproteobacteria</taxon>
        <taxon>Aeromonadales</taxon>
        <taxon>Aeromonadaceae</taxon>
        <taxon>Aeromonas</taxon>
    </lineage>
</organism>
<proteinExistence type="inferred from homology"/>
<reference key="1">
    <citation type="journal article" date="2008" name="BMC Genomics">
        <title>The genome of Aeromonas salmonicida subsp. salmonicida A449: insights into the evolution of a fish pathogen.</title>
        <authorList>
            <person name="Reith M.E."/>
            <person name="Singh R.K."/>
            <person name="Curtis B."/>
            <person name="Boyd J.M."/>
            <person name="Bouevitch A."/>
            <person name="Kimball J."/>
            <person name="Munholland J."/>
            <person name="Murphy C."/>
            <person name="Sarty D."/>
            <person name="Williams J."/>
            <person name="Nash J.H."/>
            <person name="Johnson S.C."/>
            <person name="Brown L.L."/>
        </authorList>
    </citation>
    <scope>NUCLEOTIDE SEQUENCE [LARGE SCALE GENOMIC DNA]</scope>
    <source>
        <strain>A449</strain>
    </source>
</reference>
<keyword id="KW-0046">Antibiotic resistance</keyword>
<keyword id="KW-0441">Lipid A biosynthesis</keyword>
<keyword id="KW-0444">Lipid biosynthesis</keyword>
<keyword id="KW-0443">Lipid metabolism</keyword>
<keyword id="KW-0448">Lipopolysaccharide biosynthesis</keyword>
<keyword id="KW-0511">Multifunctional enzyme</keyword>
<keyword id="KW-0520">NAD</keyword>
<keyword id="KW-0560">Oxidoreductase</keyword>
<keyword id="KW-0808">Transferase</keyword>
<protein>
    <recommendedName>
        <fullName evidence="1">Bifunctional polymyxin resistance protein ArnA</fullName>
    </recommendedName>
    <domain>
        <recommendedName>
            <fullName evidence="1">UDP-4-amino-4-deoxy-L-arabinose formyltransferase</fullName>
            <ecNumber evidence="1">2.1.2.13</ecNumber>
        </recommendedName>
        <alternativeName>
            <fullName evidence="1">ArnAFT</fullName>
        </alternativeName>
        <alternativeName>
            <fullName evidence="1">UDP-L-Ara4N formyltransferase</fullName>
        </alternativeName>
    </domain>
    <domain>
        <recommendedName>
            <fullName evidence="1">UDP-glucuronic acid oxidase, UDP-4-keto-hexauronic acid decarboxylating</fullName>
            <ecNumber evidence="1">1.1.1.305</ecNumber>
        </recommendedName>
        <alternativeName>
            <fullName evidence="1">ArnADH</fullName>
        </alternativeName>
        <alternativeName>
            <fullName evidence="1">UDP-GlcUA decarboxylase</fullName>
        </alternativeName>
        <alternativeName>
            <fullName evidence="1">UDP-glucuronic acid dehydrogenase</fullName>
        </alternativeName>
    </domain>
</protein>
<accession>A4SQW9</accession>
<name>ARNA_AERS4</name>
<evidence type="ECO:0000255" key="1">
    <source>
        <dbReference type="HAMAP-Rule" id="MF_01166"/>
    </source>
</evidence>
<sequence length="663" mass="74172">MKAVVFAYHDIGCTGIEALLEAGYEIQAVFTHADDPSENRFFGSVAQLCAEHGLPVYSPEDVNHPLWVEHIKGLAPQALFSFYYRHMLKQEILDIPSAGAFNLHGSLLPAYRGRAPINWCLVNGEQLTGITLHQMTMRPDAGAIVAQQAVAIKWADTALTLHGKVRLAAKALLDAELPKLRTGDISLTPQDESRASYYGRRTPADGELHWDKSARDLYNLVRAVTQPYPGAFSFAGDRKLTVWKATHIAQDSDMLPGTILSQDPLRIACGEGVLEIVAGQAEGGLYVRGAQLARELGLVAGMRLGAKASSALRKERLTRVLILGVNGFIGNHLTERLLKDGRYEIYGLDISASALGRFIDHPHFHFVEGDISIHTEWIEYHIKKCDVILPLVAIATPIEYTRNPLRVFELDFEENLKIVRYCVKYNKRIIFPSTSEVYGMCDDHSFDEDESRLIVGPIHKQRWIYSVSKQLLDRVIWAYGKKEGLNFTLFRPFNWMGPRLDSLDSARIGSSRAITQLILNLVDGTPIQLVDGGAQKRCFTDIEDGIEALFRIIENKGNRCDGQIINIGSPDNEASILQMAEVLLGKFEAHPLRHHFPPFAGFKRVESKSFYGDGYQDVSHRRPSIKNARRLLDWEPTIEMEETIGKTLDFFLQGAVSTGVEHD</sequence>
<gene>
    <name evidence="1" type="primary">arnA</name>
    <name type="ordered locus">ASA_3309</name>
</gene>
<feature type="chain" id="PRO_1000065673" description="Bifunctional polymyxin resistance protein ArnA">
    <location>
        <begin position="1"/>
        <end position="663"/>
    </location>
</feature>
<feature type="region of interest" description="Formyltransferase ArnAFT">
    <location>
        <begin position="1"/>
        <end position="304"/>
    </location>
</feature>
<feature type="region of interest" description="Dehydrogenase ArnADH">
    <location>
        <begin position="316"/>
        <end position="663"/>
    </location>
</feature>
<feature type="active site" description="Proton donor; for formyltransferase activity" evidence="1">
    <location>
        <position position="104"/>
    </location>
</feature>
<feature type="active site" description="Proton acceptor; for decarboxylase activity" evidence="1">
    <location>
        <position position="436"/>
    </location>
</feature>
<feature type="active site" description="Proton donor; for decarboxylase activity" evidence="1">
    <location>
        <position position="621"/>
    </location>
</feature>
<feature type="binding site" evidence="1">
    <location>
        <position position="114"/>
    </location>
    <ligand>
        <name>(6R)-10-formyltetrahydrofolate</name>
        <dbReference type="ChEBI" id="CHEBI:195366"/>
    </ligand>
</feature>
<feature type="binding site" evidence="1">
    <location>
        <begin position="136"/>
        <end position="140"/>
    </location>
    <ligand>
        <name>(6R)-10-formyltetrahydrofolate</name>
        <dbReference type="ChEBI" id="CHEBI:195366"/>
    </ligand>
</feature>
<feature type="binding site" evidence="1">
    <location>
        <position position="349"/>
    </location>
    <ligand>
        <name>NAD(+)</name>
        <dbReference type="ChEBI" id="CHEBI:57540"/>
    </ligand>
</feature>
<feature type="binding site" evidence="1">
    <location>
        <begin position="370"/>
        <end position="371"/>
    </location>
    <ligand>
        <name>NAD(+)</name>
        <dbReference type="ChEBI" id="CHEBI:57540"/>
    </ligand>
</feature>
<feature type="binding site" evidence="1">
    <location>
        <position position="395"/>
    </location>
    <ligand>
        <name>UDP-alpha-D-glucuronate</name>
        <dbReference type="ChEBI" id="CHEBI:58052"/>
    </ligand>
</feature>
<feature type="binding site" evidence="1">
    <location>
        <position position="400"/>
    </location>
    <ligand>
        <name>UDP-alpha-D-glucuronate</name>
        <dbReference type="ChEBI" id="CHEBI:58052"/>
    </ligand>
</feature>
<feature type="binding site" evidence="1">
    <location>
        <begin position="434"/>
        <end position="435"/>
    </location>
    <ligand>
        <name>UDP-alpha-D-glucuronate</name>
        <dbReference type="ChEBI" id="CHEBI:58052"/>
    </ligand>
</feature>
<feature type="binding site" evidence="1">
    <location>
        <position position="462"/>
    </location>
    <ligand>
        <name>UDP-alpha-D-glucuronate</name>
        <dbReference type="ChEBI" id="CHEBI:58052"/>
    </ligand>
</feature>
<feature type="binding site" evidence="1">
    <location>
        <position position="494"/>
    </location>
    <ligand>
        <name>UDP-alpha-D-glucuronate</name>
        <dbReference type="ChEBI" id="CHEBI:58052"/>
    </ligand>
</feature>
<feature type="binding site" evidence="1">
    <location>
        <begin position="528"/>
        <end position="537"/>
    </location>
    <ligand>
        <name>UDP-alpha-D-glucuronate</name>
        <dbReference type="ChEBI" id="CHEBI:58052"/>
    </ligand>
</feature>
<feature type="binding site" evidence="1">
    <location>
        <position position="615"/>
    </location>
    <ligand>
        <name>UDP-alpha-D-glucuronate</name>
        <dbReference type="ChEBI" id="CHEBI:58052"/>
    </ligand>
</feature>
<feature type="site" description="Transition state stabilizer" evidence="1">
    <location>
        <position position="102"/>
    </location>
</feature>
<feature type="site" description="Raises pKa of active site His" evidence="1">
    <location>
        <position position="140"/>
    </location>
</feature>